<reference key="1">
    <citation type="journal article" date="2008" name="J. Bacteriol.">
        <title>Comparative genome sequence analysis of multidrug-resistant Acinetobacter baumannii.</title>
        <authorList>
            <person name="Adams M.D."/>
            <person name="Goglin K."/>
            <person name="Molyneaux N."/>
            <person name="Hujer K.M."/>
            <person name="Lavender H."/>
            <person name="Jamison J.J."/>
            <person name="MacDonald I.J."/>
            <person name="Martin K.M."/>
            <person name="Russo T."/>
            <person name="Campagnari A.A."/>
            <person name="Hujer A.M."/>
            <person name="Bonomo R.A."/>
            <person name="Gill S.R."/>
        </authorList>
    </citation>
    <scope>NUCLEOTIDE SEQUENCE [LARGE SCALE GENOMIC DNA]</scope>
    <source>
        <strain>AB307-0294</strain>
    </source>
</reference>
<protein>
    <recommendedName>
        <fullName evidence="1">Small ribosomal subunit protein uS10</fullName>
    </recommendedName>
    <alternativeName>
        <fullName evidence="2">30S ribosomal protein S10</fullName>
    </alternativeName>
</protein>
<accession>B7GW01</accession>
<feature type="chain" id="PRO_1000127065" description="Small ribosomal subunit protein uS10">
    <location>
        <begin position="1"/>
        <end position="103"/>
    </location>
</feature>
<comment type="function">
    <text evidence="1">Involved in the binding of tRNA to the ribosomes.</text>
</comment>
<comment type="subunit">
    <text evidence="1">Part of the 30S ribosomal subunit.</text>
</comment>
<comment type="similarity">
    <text evidence="1">Belongs to the universal ribosomal protein uS10 family.</text>
</comment>
<evidence type="ECO:0000255" key="1">
    <source>
        <dbReference type="HAMAP-Rule" id="MF_00508"/>
    </source>
</evidence>
<evidence type="ECO:0000305" key="2"/>
<keyword id="KW-0687">Ribonucleoprotein</keyword>
<keyword id="KW-0689">Ribosomal protein</keyword>
<dbReference type="EMBL" id="CP001172">
    <property type="protein sequence ID" value="ACJ58871.1"/>
    <property type="molecule type" value="Genomic_DNA"/>
</dbReference>
<dbReference type="RefSeq" id="WP_000070912.1">
    <property type="nucleotide sequence ID" value="NZ_CP001172.1"/>
</dbReference>
<dbReference type="SMR" id="B7GW01"/>
<dbReference type="GeneID" id="97425198"/>
<dbReference type="HOGENOM" id="CLU_122625_1_3_6"/>
<dbReference type="Proteomes" id="UP000006924">
    <property type="component" value="Chromosome"/>
</dbReference>
<dbReference type="GO" id="GO:1990904">
    <property type="term" value="C:ribonucleoprotein complex"/>
    <property type="evidence" value="ECO:0007669"/>
    <property type="project" value="UniProtKB-KW"/>
</dbReference>
<dbReference type="GO" id="GO:0005840">
    <property type="term" value="C:ribosome"/>
    <property type="evidence" value="ECO:0007669"/>
    <property type="project" value="UniProtKB-KW"/>
</dbReference>
<dbReference type="GO" id="GO:0003735">
    <property type="term" value="F:structural constituent of ribosome"/>
    <property type="evidence" value="ECO:0007669"/>
    <property type="project" value="InterPro"/>
</dbReference>
<dbReference type="GO" id="GO:0000049">
    <property type="term" value="F:tRNA binding"/>
    <property type="evidence" value="ECO:0007669"/>
    <property type="project" value="UniProtKB-UniRule"/>
</dbReference>
<dbReference type="GO" id="GO:0006412">
    <property type="term" value="P:translation"/>
    <property type="evidence" value="ECO:0007669"/>
    <property type="project" value="UniProtKB-UniRule"/>
</dbReference>
<dbReference type="FunFam" id="3.30.70.600:FF:000001">
    <property type="entry name" value="30S ribosomal protein S10"/>
    <property type="match status" value="1"/>
</dbReference>
<dbReference type="Gene3D" id="3.30.70.600">
    <property type="entry name" value="Ribosomal protein S10 domain"/>
    <property type="match status" value="1"/>
</dbReference>
<dbReference type="HAMAP" id="MF_00508">
    <property type="entry name" value="Ribosomal_uS10"/>
    <property type="match status" value="1"/>
</dbReference>
<dbReference type="InterPro" id="IPR001848">
    <property type="entry name" value="Ribosomal_uS10"/>
</dbReference>
<dbReference type="InterPro" id="IPR018268">
    <property type="entry name" value="Ribosomal_uS10_CS"/>
</dbReference>
<dbReference type="InterPro" id="IPR027486">
    <property type="entry name" value="Ribosomal_uS10_dom"/>
</dbReference>
<dbReference type="InterPro" id="IPR036838">
    <property type="entry name" value="Ribosomal_uS10_dom_sf"/>
</dbReference>
<dbReference type="NCBIfam" id="NF001861">
    <property type="entry name" value="PRK00596.1"/>
    <property type="match status" value="1"/>
</dbReference>
<dbReference type="NCBIfam" id="TIGR01049">
    <property type="entry name" value="rpsJ_bact"/>
    <property type="match status" value="1"/>
</dbReference>
<dbReference type="PANTHER" id="PTHR11700">
    <property type="entry name" value="30S RIBOSOMAL PROTEIN S10 FAMILY MEMBER"/>
    <property type="match status" value="1"/>
</dbReference>
<dbReference type="Pfam" id="PF00338">
    <property type="entry name" value="Ribosomal_S10"/>
    <property type="match status" value="1"/>
</dbReference>
<dbReference type="PRINTS" id="PR00971">
    <property type="entry name" value="RIBOSOMALS10"/>
</dbReference>
<dbReference type="SMART" id="SM01403">
    <property type="entry name" value="Ribosomal_S10"/>
    <property type="match status" value="1"/>
</dbReference>
<dbReference type="SUPFAM" id="SSF54999">
    <property type="entry name" value="Ribosomal protein S10"/>
    <property type="match status" value="1"/>
</dbReference>
<dbReference type="PROSITE" id="PS00361">
    <property type="entry name" value="RIBOSOMAL_S10"/>
    <property type="match status" value="1"/>
</dbReference>
<organism>
    <name type="scientific">Acinetobacter baumannii (strain AB307-0294)</name>
    <dbReference type="NCBI Taxonomy" id="557600"/>
    <lineage>
        <taxon>Bacteria</taxon>
        <taxon>Pseudomonadati</taxon>
        <taxon>Pseudomonadota</taxon>
        <taxon>Gammaproteobacteria</taxon>
        <taxon>Moraxellales</taxon>
        <taxon>Moraxellaceae</taxon>
        <taxon>Acinetobacter</taxon>
        <taxon>Acinetobacter calcoaceticus/baumannii complex</taxon>
    </lineage>
</organism>
<gene>
    <name evidence="1" type="primary">rpsJ</name>
    <name type="ordered locus">ABBFA_000431</name>
</gene>
<sequence>MSNQRIRIRLKSFDHRLIDQSAQEIVETAKRTGAQVCGPIPMPTRIERFNVLTSPHVNKDARDQYEIRTYKRLIDIVQPTDKTVDALMKLDLAAGVDVQIALG</sequence>
<name>RS10_ACIB3</name>
<proteinExistence type="inferred from homology"/>